<evidence type="ECO:0000255" key="1">
    <source>
        <dbReference type="HAMAP-Rule" id="MF_01345"/>
    </source>
</evidence>
<evidence type="ECO:0000305" key="2"/>
<proteinExistence type="inferred from homology"/>
<feature type="chain" id="PRO_1000166485" description="Small ribosomal subunit protein uS17">
    <location>
        <begin position="1"/>
        <end position="87"/>
    </location>
</feature>
<comment type="function">
    <text evidence="1">One of the primary rRNA binding proteins, it binds specifically to the 5'-end of 16S ribosomal RNA.</text>
</comment>
<comment type="subunit">
    <text evidence="1">Part of the 30S ribosomal subunit.</text>
</comment>
<comment type="similarity">
    <text evidence="1">Belongs to the universal ribosomal protein uS17 family.</text>
</comment>
<gene>
    <name evidence="1" type="primary">rpsQ</name>
    <name type="ordered locus">MCCL_0204</name>
</gene>
<reference key="1">
    <citation type="journal article" date="2009" name="J. Bacteriol.">
        <title>Complete genome sequence of Macrococcus caseolyticus strain JCSCS5402, reflecting the ancestral genome of the human-pathogenic staphylococci.</title>
        <authorList>
            <person name="Baba T."/>
            <person name="Kuwahara-Arai K."/>
            <person name="Uchiyama I."/>
            <person name="Takeuchi F."/>
            <person name="Ito T."/>
            <person name="Hiramatsu K."/>
        </authorList>
    </citation>
    <scope>NUCLEOTIDE SEQUENCE [LARGE SCALE GENOMIC DNA]</scope>
    <source>
        <strain>JCSC5402</strain>
    </source>
</reference>
<protein>
    <recommendedName>
        <fullName evidence="1">Small ribosomal subunit protein uS17</fullName>
    </recommendedName>
    <alternativeName>
        <fullName evidence="2">30S ribosomal protein S17</fullName>
    </alternativeName>
</protein>
<dbReference type="EMBL" id="AP009484">
    <property type="protein sequence ID" value="BAH16911.1"/>
    <property type="molecule type" value="Genomic_DNA"/>
</dbReference>
<dbReference type="RefSeq" id="WP_012656115.1">
    <property type="nucleotide sequence ID" value="NC_011999.1"/>
</dbReference>
<dbReference type="SMR" id="B9E9K0"/>
<dbReference type="STRING" id="458233.MCCL_0204"/>
<dbReference type="GeneID" id="61130626"/>
<dbReference type="KEGG" id="mcl:MCCL_0204"/>
<dbReference type="eggNOG" id="COG0186">
    <property type="taxonomic scope" value="Bacteria"/>
</dbReference>
<dbReference type="HOGENOM" id="CLU_073626_1_0_9"/>
<dbReference type="OrthoDB" id="9811714at2"/>
<dbReference type="Proteomes" id="UP000001383">
    <property type="component" value="Chromosome"/>
</dbReference>
<dbReference type="GO" id="GO:0022627">
    <property type="term" value="C:cytosolic small ribosomal subunit"/>
    <property type="evidence" value="ECO:0007669"/>
    <property type="project" value="TreeGrafter"/>
</dbReference>
<dbReference type="GO" id="GO:0019843">
    <property type="term" value="F:rRNA binding"/>
    <property type="evidence" value="ECO:0007669"/>
    <property type="project" value="UniProtKB-UniRule"/>
</dbReference>
<dbReference type="GO" id="GO:0003735">
    <property type="term" value="F:structural constituent of ribosome"/>
    <property type="evidence" value="ECO:0007669"/>
    <property type="project" value="InterPro"/>
</dbReference>
<dbReference type="GO" id="GO:0006412">
    <property type="term" value="P:translation"/>
    <property type="evidence" value="ECO:0007669"/>
    <property type="project" value="UniProtKB-UniRule"/>
</dbReference>
<dbReference type="CDD" id="cd00364">
    <property type="entry name" value="Ribosomal_uS17"/>
    <property type="match status" value="1"/>
</dbReference>
<dbReference type="FunFam" id="2.40.50.140:FF:000026">
    <property type="entry name" value="30S ribosomal protein S17"/>
    <property type="match status" value="1"/>
</dbReference>
<dbReference type="Gene3D" id="2.40.50.140">
    <property type="entry name" value="Nucleic acid-binding proteins"/>
    <property type="match status" value="1"/>
</dbReference>
<dbReference type="HAMAP" id="MF_01345_B">
    <property type="entry name" value="Ribosomal_uS17_B"/>
    <property type="match status" value="1"/>
</dbReference>
<dbReference type="InterPro" id="IPR012340">
    <property type="entry name" value="NA-bd_OB-fold"/>
</dbReference>
<dbReference type="InterPro" id="IPR000266">
    <property type="entry name" value="Ribosomal_uS17"/>
</dbReference>
<dbReference type="InterPro" id="IPR019984">
    <property type="entry name" value="Ribosomal_uS17_bact/chlr"/>
</dbReference>
<dbReference type="InterPro" id="IPR019979">
    <property type="entry name" value="Ribosomal_uS17_CS"/>
</dbReference>
<dbReference type="NCBIfam" id="NF004123">
    <property type="entry name" value="PRK05610.1"/>
    <property type="match status" value="1"/>
</dbReference>
<dbReference type="NCBIfam" id="TIGR03635">
    <property type="entry name" value="uS17_bact"/>
    <property type="match status" value="1"/>
</dbReference>
<dbReference type="PANTHER" id="PTHR10744">
    <property type="entry name" value="40S RIBOSOMAL PROTEIN S11 FAMILY MEMBER"/>
    <property type="match status" value="1"/>
</dbReference>
<dbReference type="PANTHER" id="PTHR10744:SF1">
    <property type="entry name" value="SMALL RIBOSOMAL SUBUNIT PROTEIN US17M"/>
    <property type="match status" value="1"/>
</dbReference>
<dbReference type="Pfam" id="PF00366">
    <property type="entry name" value="Ribosomal_S17"/>
    <property type="match status" value="1"/>
</dbReference>
<dbReference type="PRINTS" id="PR00973">
    <property type="entry name" value="RIBOSOMALS17"/>
</dbReference>
<dbReference type="SUPFAM" id="SSF50249">
    <property type="entry name" value="Nucleic acid-binding proteins"/>
    <property type="match status" value="1"/>
</dbReference>
<dbReference type="PROSITE" id="PS00056">
    <property type="entry name" value="RIBOSOMAL_S17"/>
    <property type="match status" value="1"/>
</dbReference>
<keyword id="KW-1185">Reference proteome</keyword>
<keyword id="KW-0687">Ribonucleoprotein</keyword>
<keyword id="KW-0689">Ribosomal protein</keyword>
<keyword id="KW-0694">RNA-binding</keyword>
<keyword id="KW-0699">rRNA-binding</keyword>
<name>RS17_MACCJ</name>
<sequence length="87" mass="10112">MSERNNRKVYTGKVVSDKMDKTITVVVETYKTHSLYGKRVKYSKKYKAHDENNTAKMGDIVKIMETRPLSATKRFRLVEVVEESVII</sequence>
<accession>B9E9K0</accession>
<organism>
    <name type="scientific">Macrococcus caseolyticus (strain JCSC5402)</name>
    <name type="common">Macrococcoides caseolyticum</name>
    <dbReference type="NCBI Taxonomy" id="458233"/>
    <lineage>
        <taxon>Bacteria</taxon>
        <taxon>Bacillati</taxon>
        <taxon>Bacillota</taxon>
        <taxon>Bacilli</taxon>
        <taxon>Bacillales</taxon>
        <taxon>Staphylococcaceae</taxon>
        <taxon>Macrococcoides</taxon>
    </lineage>
</organism>